<feature type="chain" id="PRO_1000025268" description="Co-chaperonin GroES">
    <location>
        <begin position="1"/>
        <end position="96"/>
    </location>
</feature>
<comment type="function">
    <text evidence="1">Together with the chaperonin GroEL, plays an essential role in assisting protein folding. The GroEL-GroES system forms a nano-cage that allows encapsulation of the non-native substrate proteins and provides a physical environment optimized to promote and accelerate protein folding. GroES binds to the apical surface of the GroEL ring, thereby capping the opening of the GroEL channel.</text>
</comment>
<comment type="subunit">
    <text evidence="1">Heptamer of 7 subunits arranged in a ring. Interacts with the chaperonin GroEL.</text>
</comment>
<comment type="subcellular location">
    <subcellularLocation>
        <location evidence="1">Cytoplasm</location>
    </subcellularLocation>
</comment>
<comment type="similarity">
    <text evidence="1">Belongs to the GroES chaperonin family.</text>
</comment>
<dbReference type="EMBL" id="CP000672">
    <property type="protein sequence ID" value="ABR00103.1"/>
    <property type="molecule type" value="Genomic_DNA"/>
</dbReference>
<dbReference type="SMR" id="A5UH47"/>
<dbReference type="KEGG" id="hiq:CGSHiGG_05970"/>
<dbReference type="HOGENOM" id="CLU_132825_1_1_6"/>
<dbReference type="Proteomes" id="UP000001990">
    <property type="component" value="Chromosome"/>
</dbReference>
<dbReference type="GO" id="GO:0005737">
    <property type="term" value="C:cytoplasm"/>
    <property type="evidence" value="ECO:0007669"/>
    <property type="project" value="UniProtKB-SubCell"/>
</dbReference>
<dbReference type="GO" id="GO:0005524">
    <property type="term" value="F:ATP binding"/>
    <property type="evidence" value="ECO:0007669"/>
    <property type="project" value="InterPro"/>
</dbReference>
<dbReference type="GO" id="GO:0046872">
    <property type="term" value="F:metal ion binding"/>
    <property type="evidence" value="ECO:0007669"/>
    <property type="project" value="TreeGrafter"/>
</dbReference>
<dbReference type="GO" id="GO:0044183">
    <property type="term" value="F:protein folding chaperone"/>
    <property type="evidence" value="ECO:0007669"/>
    <property type="project" value="InterPro"/>
</dbReference>
<dbReference type="GO" id="GO:0051087">
    <property type="term" value="F:protein-folding chaperone binding"/>
    <property type="evidence" value="ECO:0007669"/>
    <property type="project" value="TreeGrafter"/>
</dbReference>
<dbReference type="GO" id="GO:0051082">
    <property type="term" value="F:unfolded protein binding"/>
    <property type="evidence" value="ECO:0007669"/>
    <property type="project" value="TreeGrafter"/>
</dbReference>
<dbReference type="GO" id="GO:0051085">
    <property type="term" value="P:chaperone cofactor-dependent protein refolding"/>
    <property type="evidence" value="ECO:0007669"/>
    <property type="project" value="TreeGrafter"/>
</dbReference>
<dbReference type="CDD" id="cd00320">
    <property type="entry name" value="cpn10"/>
    <property type="match status" value="1"/>
</dbReference>
<dbReference type="FunFam" id="2.30.33.40:FF:000001">
    <property type="entry name" value="10 kDa chaperonin"/>
    <property type="match status" value="1"/>
</dbReference>
<dbReference type="Gene3D" id="2.30.33.40">
    <property type="entry name" value="GroES chaperonin"/>
    <property type="match status" value="1"/>
</dbReference>
<dbReference type="HAMAP" id="MF_00580">
    <property type="entry name" value="CH10"/>
    <property type="match status" value="1"/>
</dbReference>
<dbReference type="InterPro" id="IPR020818">
    <property type="entry name" value="Chaperonin_GroES"/>
</dbReference>
<dbReference type="InterPro" id="IPR037124">
    <property type="entry name" value="Chaperonin_GroES_sf"/>
</dbReference>
<dbReference type="InterPro" id="IPR018369">
    <property type="entry name" value="Chaprnonin_Cpn10_CS"/>
</dbReference>
<dbReference type="InterPro" id="IPR011032">
    <property type="entry name" value="GroES-like_sf"/>
</dbReference>
<dbReference type="NCBIfam" id="NF001526">
    <property type="entry name" value="PRK00364.1-1"/>
    <property type="match status" value="1"/>
</dbReference>
<dbReference type="NCBIfam" id="NF001531">
    <property type="entry name" value="PRK00364.2-2"/>
    <property type="match status" value="1"/>
</dbReference>
<dbReference type="PANTHER" id="PTHR10772">
    <property type="entry name" value="10 KDA HEAT SHOCK PROTEIN"/>
    <property type="match status" value="1"/>
</dbReference>
<dbReference type="PANTHER" id="PTHR10772:SF58">
    <property type="entry name" value="CO-CHAPERONIN GROES"/>
    <property type="match status" value="1"/>
</dbReference>
<dbReference type="Pfam" id="PF00166">
    <property type="entry name" value="Cpn10"/>
    <property type="match status" value="1"/>
</dbReference>
<dbReference type="PRINTS" id="PR00297">
    <property type="entry name" value="CHAPERONIN10"/>
</dbReference>
<dbReference type="SMART" id="SM00883">
    <property type="entry name" value="Cpn10"/>
    <property type="match status" value="1"/>
</dbReference>
<dbReference type="SUPFAM" id="SSF50129">
    <property type="entry name" value="GroES-like"/>
    <property type="match status" value="1"/>
</dbReference>
<dbReference type="PROSITE" id="PS00681">
    <property type="entry name" value="CHAPERONINS_CPN10"/>
    <property type="match status" value="1"/>
</dbReference>
<evidence type="ECO:0000255" key="1">
    <source>
        <dbReference type="HAMAP-Rule" id="MF_00580"/>
    </source>
</evidence>
<accession>A5UH47</accession>
<proteinExistence type="inferred from homology"/>
<keyword id="KW-0143">Chaperone</keyword>
<keyword id="KW-0963">Cytoplasm</keyword>
<sequence length="96" mass="10355">MNIRPLHDRVIIKREEVETRSAGGIVLTGSAATKSTRAKVLAVGKGRILENGTVQPLDVKVGDTVIFNDGYGVKNEKIDGEEVLIISENDILAIVE</sequence>
<name>CH10_HAEIG</name>
<organism>
    <name type="scientific">Haemophilus influenzae (strain PittGG)</name>
    <dbReference type="NCBI Taxonomy" id="374931"/>
    <lineage>
        <taxon>Bacteria</taxon>
        <taxon>Pseudomonadati</taxon>
        <taxon>Pseudomonadota</taxon>
        <taxon>Gammaproteobacteria</taxon>
        <taxon>Pasteurellales</taxon>
        <taxon>Pasteurellaceae</taxon>
        <taxon>Haemophilus</taxon>
    </lineage>
</organism>
<gene>
    <name evidence="1" type="primary">groES</name>
    <name evidence="1" type="synonym">groS</name>
    <name type="ordered locus">CGSHiGG_05970</name>
</gene>
<reference key="1">
    <citation type="journal article" date="2007" name="Genome Biol.">
        <title>Characterization and modeling of the Haemophilus influenzae core and supragenomes based on the complete genomic sequences of Rd and 12 clinical nontypeable strains.</title>
        <authorList>
            <person name="Hogg J.S."/>
            <person name="Hu F.Z."/>
            <person name="Janto B."/>
            <person name="Boissy R."/>
            <person name="Hayes J."/>
            <person name="Keefe R."/>
            <person name="Post J.C."/>
            <person name="Ehrlich G.D."/>
        </authorList>
    </citation>
    <scope>NUCLEOTIDE SEQUENCE [LARGE SCALE GENOMIC DNA]</scope>
    <source>
        <strain>PittGG</strain>
    </source>
</reference>
<protein>
    <recommendedName>
        <fullName evidence="1">Co-chaperonin GroES</fullName>
    </recommendedName>
    <alternativeName>
        <fullName evidence="1">10 kDa chaperonin</fullName>
    </alternativeName>
    <alternativeName>
        <fullName evidence="1">Chaperonin-10</fullName>
        <shortName evidence="1">Cpn10</shortName>
    </alternativeName>
</protein>